<name>PUP_CORA7</name>
<feature type="chain" id="PRO_0000390573" description="Prokaryotic ubiquitin-like protein Pup">
    <location>
        <begin position="1"/>
        <end position="63"/>
    </location>
</feature>
<feature type="region of interest" description="Disordered" evidence="2">
    <location>
        <begin position="1"/>
        <end position="35"/>
    </location>
</feature>
<feature type="region of interest" description="ARC ATPase binding" evidence="1">
    <location>
        <begin position="19"/>
        <end position="57"/>
    </location>
</feature>
<feature type="cross-link" description="Isoglutamyl lysine isopeptide (Glu-Lys) (interchain with K-? in acceptor proteins)" evidence="1">
    <location>
        <position position="63"/>
    </location>
</feature>
<comment type="function">
    <text evidence="1">Protein modifier that is covalently attached to lysine residues of substrate proteins, thereby targeting them for proteasomal degradation. The tagging system is termed pupylation.</text>
</comment>
<comment type="pathway">
    <text evidence="1">Protein degradation; proteasomal Pup-dependent pathway.</text>
</comment>
<comment type="subunit">
    <text evidence="1">Strongly interacts with the proteasome-associated ATPase ARC through a hydrophobic interface; the interacting region of Pup lies in its C-terminal half. There is one Pup binding site per ARC hexamer ring.</text>
</comment>
<comment type="domain">
    <text evidence="1">The N-terminal unstructured half of Pup provides a signal required to initiate unfolding and degradation by the proteasome but is not needed for pupylation, while the C-terminal helical half of Pup interacts with ARC to target proteins to the proteasome.</text>
</comment>
<comment type="similarity">
    <text evidence="1">Belongs to the prokaryotic ubiquitin-like protein family.</text>
</comment>
<gene>
    <name evidence="1" type="primary">pup</name>
    <name type="ordered locus">cauri_1263</name>
</gene>
<sequence>MSGQQSQINAGGGNGQGGDTPEFDAGQVSINSAGTDDLLDEIDGLLESNAEEFVRSYVQKGGE</sequence>
<reference key="1">
    <citation type="journal article" date="2010" name="BMC Genomics">
        <title>Complete genome sequence and lifestyle of black-pigmented Corynebacterium aurimucosum ATCC 700975 (formerly C. nigricans CN-1) isolated from a vaginal swab of a woman with spontaneous abortion.</title>
        <authorList>
            <person name="Trost E."/>
            <person name="Gotker S."/>
            <person name="Schneider J."/>
            <person name="Schneiker-Bekel S."/>
            <person name="Szczepanowski R."/>
            <person name="Tilker A."/>
            <person name="Viehoever P."/>
            <person name="Arnold W."/>
            <person name="Bekel T."/>
            <person name="Blom J."/>
            <person name="Gartemann K.H."/>
            <person name="Linke B."/>
            <person name="Goesmann A."/>
            <person name="Puhler A."/>
            <person name="Shukla S.K."/>
            <person name="Tauch A."/>
        </authorList>
    </citation>
    <scope>NUCLEOTIDE SEQUENCE [LARGE SCALE GENOMIC DNA]</scope>
    <source>
        <strain>ATCC 700975 / DSM 44827 / CIP 107346 / CN-1</strain>
    </source>
</reference>
<dbReference type="EMBL" id="CP001601">
    <property type="protein sequence ID" value="ACP32856.1"/>
    <property type="molecule type" value="Genomic_DNA"/>
</dbReference>
<dbReference type="RefSeq" id="WP_010186632.1">
    <property type="nucleotide sequence ID" value="NZ_ACLH01000002.1"/>
</dbReference>
<dbReference type="SMR" id="C3PGA2"/>
<dbReference type="STRING" id="548476.cauri_1263"/>
<dbReference type="GeneID" id="31923886"/>
<dbReference type="KEGG" id="car:cauri_1263"/>
<dbReference type="eggNOG" id="ENOG5033BS6">
    <property type="taxonomic scope" value="Bacteria"/>
</dbReference>
<dbReference type="HOGENOM" id="CLU_183816_1_0_11"/>
<dbReference type="UniPathway" id="UPA00997"/>
<dbReference type="Proteomes" id="UP000002077">
    <property type="component" value="Chromosome"/>
</dbReference>
<dbReference type="GO" id="GO:0070628">
    <property type="term" value="F:proteasome binding"/>
    <property type="evidence" value="ECO:0007669"/>
    <property type="project" value="UniProtKB-UniRule"/>
</dbReference>
<dbReference type="GO" id="GO:0031386">
    <property type="term" value="F:protein tag activity"/>
    <property type="evidence" value="ECO:0007669"/>
    <property type="project" value="UniProtKB-UniRule"/>
</dbReference>
<dbReference type="GO" id="GO:0019941">
    <property type="term" value="P:modification-dependent protein catabolic process"/>
    <property type="evidence" value="ECO:0007669"/>
    <property type="project" value="UniProtKB-UniRule"/>
</dbReference>
<dbReference type="GO" id="GO:0010498">
    <property type="term" value="P:proteasomal protein catabolic process"/>
    <property type="evidence" value="ECO:0007669"/>
    <property type="project" value="UniProtKB-UniRule"/>
</dbReference>
<dbReference type="GO" id="GO:0070490">
    <property type="term" value="P:protein pupylation"/>
    <property type="evidence" value="ECO:0007669"/>
    <property type="project" value="UniProtKB-UniRule"/>
</dbReference>
<dbReference type="HAMAP" id="MF_02106">
    <property type="entry name" value="Pup"/>
    <property type="match status" value="1"/>
</dbReference>
<dbReference type="InterPro" id="IPR008515">
    <property type="entry name" value="Ubiquitin-like_Pup"/>
</dbReference>
<dbReference type="NCBIfam" id="TIGR03687">
    <property type="entry name" value="pupylate_cterm"/>
    <property type="match status" value="1"/>
</dbReference>
<dbReference type="Pfam" id="PF05639">
    <property type="entry name" value="Pup"/>
    <property type="match status" value="1"/>
</dbReference>
<proteinExistence type="inferred from homology"/>
<evidence type="ECO:0000255" key="1">
    <source>
        <dbReference type="HAMAP-Rule" id="MF_02106"/>
    </source>
</evidence>
<evidence type="ECO:0000256" key="2">
    <source>
        <dbReference type="SAM" id="MobiDB-lite"/>
    </source>
</evidence>
<keyword id="KW-1017">Isopeptide bond</keyword>
<keyword id="KW-1185">Reference proteome</keyword>
<keyword id="KW-0833">Ubl conjugation pathway</keyword>
<protein>
    <recommendedName>
        <fullName evidence="1">Prokaryotic ubiquitin-like protein Pup</fullName>
    </recommendedName>
    <alternativeName>
        <fullName evidence="1">Bacterial ubiquitin-like modifier</fullName>
    </alternativeName>
</protein>
<accession>C3PGA2</accession>
<organism>
    <name type="scientific">Corynebacterium aurimucosum (strain ATCC 700975 / DSM 44827 / CIP 107346 / CN-1)</name>
    <name type="common">Corynebacterium nigricans</name>
    <dbReference type="NCBI Taxonomy" id="548476"/>
    <lineage>
        <taxon>Bacteria</taxon>
        <taxon>Bacillati</taxon>
        <taxon>Actinomycetota</taxon>
        <taxon>Actinomycetes</taxon>
        <taxon>Mycobacteriales</taxon>
        <taxon>Corynebacteriaceae</taxon>
        <taxon>Corynebacterium</taxon>
    </lineage>
</organism>